<protein>
    <recommendedName>
        <fullName evidence="1">Ketol-acid reductoisomerase (NADP(+))</fullName>
        <shortName evidence="1">KARI</shortName>
        <ecNumber evidence="1">1.1.1.86</ecNumber>
    </recommendedName>
    <alternativeName>
        <fullName evidence="1">Acetohydroxy-acid isomeroreductase</fullName>
        <shortName evidence="1">AHIR</shortName>
    </alternativeName>
    <alternativeName>
        <fullName evidence="1">Alpha-keto-beta-hydroxylacyl reductoisomerase</fullName>
    </alternativeName>
    <alternativeName>
        <fullName evidence="1">Ketol-acid reductoisomerase type 1</fullName>
    </alternativeName>
    <alternativeName>
        <fullName evidence="1">Ketol-acid reductoisomerase type I</fullName>
    </alternativeName>
</protein>
<keyword id="KW-0028">Amino-acid biosynthesis</keyword>
<keyword id="KW-0100">Branched-chain amino acid biosynthesis</keyword>
<keyword id="KW-0460">Magnesium</keyword>
<keyword id="KW-0479">Metal-binding</keyword>
<keyword id="KW-0521">NADP</keyword>
<keyword id="KW-0560">Oxidoreductase</keyword>
<keyword id="KW-1185">Reference proteome</keyword>
<evidence type="ECO:0000255" key="1">
    <source>
        <dbReference type="HAMAP-Rule" id="MF_00435"/>
    </source>
</evidence>
<evidence type="ECO:0000255" key="2">
    <source>
        <dbReference type="PROSITE-ProRule" id="PRU01197"/>
    </source>
</evidence>
<evidence type="ECO:0000255" key="3">
    <source>
        <dbReference type="PROSITE-ProRule" id="PRU01198"/>
    </source>
</evidence>
<organism>
    <name type="scientific">Rippkaea orientalis (strain PCC 8801 / RF-1)</name>
    <name type="common">Cyanothece sp. (strain PCC 8801)</name>
    <dbReference type="NCBI Taxonomy" id="41431"/>
    <lineage>
        <taxon>Bacteria</taxon>
        <taxon>Bacillati</taxon>
        <taxon>Cyanobacteriota</taxon>
        <taxon>Cyanophyceae</taxon>
        <taxon>Oscillatoriophycideae</taxon>
        <taxon>Chroococcales</taxon>
        <taxon>Aphanothecaceae</taxon>
        <taxon>Rippkaea</taxon>
        <taxon>Rippkaea orientalis</taxon>
    </lineage>
</organism>
<name>ILVC_RIPO1</name>
<reference key="1">
    <citation type="journal article" date="2011" name="MBio">
        <title>Novel metabolic attributes of the genus Cyanothece, comprising a group of unicellular nitrogen-fixing Cyanobacteria.</title>
        <authorList>
            <person name="Bandyopadhyay A."/>
            <person name="Elvitigala T."/>
            <person name="Welsh E."/>
            <person name="Stockel J."/>
            <person name="Liberton M."/>
            <person name="Min H."/>
            <person name="Sherman L.A."/>
            <person name="Pakrasi H.B."/>
        </authorList>
    </citation>
    <scope>NUCLEOTIDE SEQUENCE [LARGE SCALE GENOMIC DNA]</scope>
    <source>
        <strain>PCC 8801 / RF-1</strain>
    </source>
</reference>
<comment type="function">
    <text evidence="1">Involved in the biosynthesis of branched-chain amino acids (BCAA). Catalyzes an alkyl-migration followed by a ketol-acid reduction of (S)-2-acetolactate (S2AL) to yield (R)-2,3-dihydroxy-isovalerate. In the isomerase reaction, S2AL is rearranged via a Mg-dependent methyl migration to produce 3-hydroxy-3-methyl-2-ketobutyrate (HMKB). In the reductase reaction, this 2-ketoacid undergoes a metal-dependent reduction by NADPH to yield (R)-2,3-dihydroxy-isovalerate.</text>
</comment>
<comment type="catalytic activity">
    <reaction evidence="1">
        <text>(2R)-2,3-dihydroxy-3-methylbutanoate + NADP(+) = (2S)-2-acetolactate + NADPH + H(+)</text>
        <dbReference type="Rhea" id="RHEA:22068"/>
        <dbReference type="ChEBI" id="CHEBI:15378"/>
        <dbReference type="ChEBI" id="CHEBI:49072"/>
        <dbReference type="ChEBI" id="CHEBI:57783"/>
        <dbReference type="ChEBI" id="CHEBI:58349"/>
        <dbReference type="ChEBI" id="CHEBI:58476"/>
        <dbReference type="EC" id="1.1.1.86"/>
    </reaction>
</comment>
<comment type="catalytic activity">
    <reaction evidence="1">
        <text>(2R,3R)-2,3-dihydroxy-3-methylpentanoate + NADP(+) = (S)-2-ethyl-2-hydroxy-3-oxobutanoate + NADPH + H(+)</text>
        <dbReference type="Rhea" id="RHEA:13493"/>
        <dbReference type="ChEBI" id="CHEBI:15378"/>
        <dbReference type="ChEBI" id="CHEBI:49256"/>
        <dbReference type="ChEBI" id="CHEBI:49258"/>
        <dbReference type="ChEBI" id="CHEBI:57783"/>
        <dbReference type="ChEBI" id="CHEBI:58349"/>
        <dbReference type="EC" id="1.1.1.86"/>
    </reaction>
</comment>
<comment type="cofactor">
    <cofactor evidence="1">
        <name>Mg(2+)</name>
        <dbReference type="ChEBI" id="CHEBI:18420"/>
    </cofactor>
    <text evidence="1">Binds 2 magnesium ions per subunit.</text>
</comment>
<comment type="pathway">
    <text evidence="1">Amino-acid biosynthesis; L-isoleucine biosynthesis; L-isoleucine from 2-oxobutanoate: step 2/4.</text>
</comment>
<comment type="pathway">
    <text evidence="1">Amino-acid biosynthesis; L-valine biosynthesis; L-valine from pyruvate: step 2/4.</text>
</comment>
<comment type="similarity">
    <text evidence="1">Belongs to the ketol-acid reductoisomerase family.</text>
</comment>
<dbReference type="EC" id="1.1.1.86" evidence="1"/>
<dbReference type="EMBL" id="CP001287">
    <property type="protein sequence ID" value="ACK65067.1"/>
    <property type="molecule type" value="Genomic_DNA"/>
</dbReference>
<dbReference type="RefSeq" id="WP_012594342.1">
    <property type="nucleotide sequence ID" value="NC_011726.1"/>
</dbReference>
<dbReference type="SMR" id="B7K0S6"/>
<dbReference type="STRING" id="41431.PCC8801_0991"/>
<dbReference type="KEGG" id="cyp:PCC8801_0991"/>
<dbReference type="eggNOG" id="COG0059">
    <property type="taxonomic scope" value="Bacteria"/>
</dbReference>
<dbReference type="HOGENOM" id="CLU_033821_0_1_3"/>
<dbReference type="OrthoDB" id="9804088at2"/>
<dbReference type="UniPathway" id="UPA00047">
    <property type="reaction ID" value="UER00056"/>
</dbReference>
<dbReference type="UniPathway" id="UPA00049">
    <property type="reaction ID" value="UER00060"/>
</dbReference>
<dbReference type="Proteomes" id="UP000008204">
    <property type="component" value="Chromosome"/>
</dbReference>
<dbReference type="GO" id="GO:0005829">
    <property type="term" value="C:cytosol"/>
    <property type="evidence" value="ECO:0007669"/>
    <property type="project" value="TreeGrafter"/>
</dbReference>
<dbReference type="GO" id="GO:0004455">
    <property type="term" value="F:ketol-acid reductoisomerase activity"/>
    <property type="evidence" value="ECO:0007669"/>
    <property type="project" value="UniProtKB-UniRule"/>
</dbReference>
<dbReference type="GO" id="GO:0000287">
    <property type="term" value="F:magnesium ion binding"/>
    <property type="evidence" value="ECO:0007669"/>
    <property type="project" value="UniProtKB-UniRule"/>
</dbReference>
<dbReference type="GO" id="GO:0050661">
    <property type="term" value="F:NADP binding"/>
    <property type="evidence" value="ECO:0007669"/>
    <property type="project" value="InterPro"/>
</dbReference>
<dbReference type="GO" id="GO:0009097">
    <property type="term" value="P:isoleucine biosynthetic process"/>
    <property type="evidence" value="ECO:0007669"/>
    <property type="project" value="UniProtKB-UniRule"/>
</dbReference>
<dbReference type="GO" id="GO:0009099">
    <property type="term" value="P:L-valine biosynthetic process"/>
    <property type="evidence" value="ECO:0007669"/>
    <property type="project" value="UniProtKB-UniRule"/>
</dbReference>
<dbReference type="FunFam" id="3.40.50.720:FF:000023">
    <property type="entry name" value="Ketol-acid reductoisomerase (NADP(+))"/>
    <property type="match status" value="1"/>
</dbReference>
<dbReference type="Gene3D" id="6.10.240.10">
    <property type="match status" value="1"/>
</dbReference>
<dbReference type="Gene3D" id="3.40.50.720">
    <property type="entry name" value="NAD(P)-binding Rossmann-like Domain"/>
    <property type="match status" value="1"/>
</dbReference>
<dbReference type="HAMAP" id="MF_00435">
    <property type="entry name" value="IlvC"/>
    <property type="match status" value="1"/>
</dbReference>
<dbReference type="InterPro" id="IPR008927">
    <property type="entry name" value="6-PGluconate_DH-like_C_sf"/>
</dbReference>
<dbReference type="InterPro" id="IPR013023">
    <property type="entry name" value="KARI"/>
</dbReference>
<dbReference type="InterPro" id="IPR000506">
    <property type="entry name" value="KARI_C"/>
</dbReference>
<dbReference type="InterPro" id="IPR013116">
    <property type="entry name" value="KARI_N"/>
</dbReference>
<dbReference type="InterPro" id="IPR014359">
    <property type="entry name" value="KARI_prok"/>
</dbReference>
<dbReference type="InterPro" id="IPR036291">
    <property type="entry name" value="NAD(P)-bd_dom_sf"/>
</dbReference>
<dbReference type="NCBIfam" id="TIGR00465">
    <property type="entry name" value="ilvC"/>
    <property type="match status" value="1"/>
</dbReference>
<dbReference type="NCBIfam" id="NF004017">
    <property type="entry name" value="PRK05479.1"/>
    <property type="match status" value="1"/>
</dbReference>
<dbReference type="NCBIfam" id="NF009940">
    <property type="entry name" value="PRK13403.1"/>
    <property type="match status" value="1"/>
</dbReference>
<dbReference type="PANTHER" id="PTHR21371">
    <property type="entry name" value="KETOL-ACID REDUCTOISOMERASE, MITOCHONDRIAL"/>
    <property type="match status" value="1"/>
</dbReference>
<dbReference type="PANTHER" id="PTHR21371:SF1">
    <property type="entry name" value="KETOL-ACID REDUCTOISOMERASE, MITOCHONDRIAL"/>
    <property type="match status" value="1"/>
</dbReference>
<dbReference type="Pfam" id="PF01450">
    <property type="entry name" value="KARI_C"/>
    <property type="match status" value="1"/>
</dbReference>
<dbReference type="Pfam" id="PF07991">
    <property type="entry name" value="KARI_N"/>
    <property type="match status" value="1"/>
</dbReference>
<dbReference type="PIRSF" id="PIRSF000116">
    <property type="entry name" value="IlvC_gammaproteo"/>
    <property type="match status" value="1"/>
</dbReference>
<dbReference type="SUPFAM" id="SSF48179">
    <property type="entry name" value="6-phosphogluconate dehydrogenase C-terminal domain-like"/>
    <property type="match status" value="1"/>
</dbReference>
<dbReference type="SUPFAM" id="SSF51735">
    <property type="entry name" value="NAD(P)-binding Rossmann-fold domains"/>
    <property type="match status" value="1"/>
</dbReference>
<dbReference type="PROSITE" id="PS51851">
    <property type="entry name" value="KARI_C"/>
    <property type="match status" value="1"/>
</dbReference>
<dbReference type="PROSITE" id="PS51850">
    <property type="entry name" value="KARI_N"/>
    <property type="match status" value="1"/>
</dbReference>
<sequence length="331" mass="36165">MARMYYDTDANLDLLAGKTIAIIGYGSQGHAHALNLKDSGINVIVGLYPGSKSAKKAEEAGLKVLSVAEAAQAADWIMILLPDEVQKAVYTHEIAPYLSEGKVLCFAHGFNIHFGQVVPPPTVDVVMIAPKGPGHLVRRTYEQGEGVPCLFAVYQDATGQARDRAMAYAKGIGGTRAGILETTFREETETDLFGEQVVLCGGLSALIKGGFETLVNAGYQPELAYFECLHEVKLIVDLIVEGGLAKMRDSISNTAEYGDLTRGPRIVTDETRAEMKKILREIQTGQFAREFVLENQSGKPGFTAMRRQEAEHPIEEVGKDLRAMFSWLKDK</sequence>
<gene>
    <name evidence="1" type="primary">ilvC</name>
    <name type="ordered locus">PCC8801_0991</name>
</gene>
<feature type="chain" id="PRO_1000190943" description="Ketol-acid reductoisomerase (NADP(+))">
    <location>
        <begin position="1"/>
        <end position="331"/>
    </location>
</feature>
<feature type="domain" description="KARI N-terminal Rossmann" evidence="2">
    <location>
        <begin position="2"/>
        <end position="182"/>
    </location>
</feature>
<feature type="domain" description="KARI C-terminal knotted" evidence="3">
    <location>
        <begin position="183"/>
        <end position="328"/>
    </location>
</feature>
<feature type="active site" evidence="1">
    <location>
        <position position="108"/>
    </location>
</feature>
<feature type="binding site" evidence="1">
    <location>
        <begin position="25"/>
        <end position="28"/>
    </location>
    <ligand>
        <name>NADP(+)</name>
        <dbReference type="ChEBI" id="CHEBI:58349"/>
    </ligand>
</feature>
<feature type="binding site" evidence="1">
    <location>
        <position position="51"/>
    </location>
    <ligand>
        <name>NADP(+)</name>
        <dbReference type="ChEBI" id="CHEBI:58349"/>
    </ligand>
</feature>
<feature type="binding site" evidence="1">
    <location>
        <position position="53"/>
    </location>
    <ligand>
        <name>NADP(+)</name>
        <dbReference type="ChEBI" id="CHEBI:58349"/>
    </ligand>
</feature>
<feature type="binding site" evidence="1">
    <location>
        <begin position="83"/>
        <end position="86"/>
    </location>
    <ligand>
        <name>NADP(+)</name>
        <dbReference type="ChEBI" id="CHEBI:58349"/>
    </ligand>
</feature>
<feature type="binding site" evidence="1">
    <location>
        <position position="134"/>
    </location>
    <ligand>
        <name>NADP(+)</name>
        <dbReference type="ChEBI" id="CHEBI:58349"/>
    </ligand>
</feature>
<feature type="binding site" evidence="1">
    <location>
        <position position="191"/>
    </location>
    <ligand>
        <name>Mg(2+)</name>
        <dbReference type="ChEBI" id="CHEBI:18420"/>
        <label>1</label>
    </ligand>
</feature>
<feature type="binding site" evidence="1">
    <location>
        <position position="191"/>
    </location>
    <ligand>
        <name>Mg(2+)</name>
        <dbReference type="ChEBI" id="CHEBI:18420"/>
        <label>2</label>
    </ligand>
</feature>
<feature type="binding site" evidence="1">
    <location>
        <position position="195"/>
    </location>
    <ligand>
        <name>Mg(2+)</name>
        <dbReference type="ChEBI" id="CHEBI:18420"/>
        <label>1</label>
    </ligand>
</feature>
<feature type="binding site" evidence="1">
    <location>
        <position position="227"/>
    </location>
    <ligand>
        <name>Mg(2+)</name>
        <dbReference type="ChEBI" id="CHEBI:18420"/>
        <label>2</label>
    </ligand>
</feature>
<feature type="binding site" evidence="1">
    <location>
        <position position="231"/>
    </location>
    <ligand>
        <name>Mg(2+)</name>
        <dbReference type="ChEBI" id="CHEBI:18420"/>
        <label>2</label>
    </ligand>
</feature>
<feature type="binding site" evidence="1">
    <location>
        <position position="252"/>
    </location>
    <ligand>
        <name>substrate</name>
    </ligand>
</feature>
<accession>B7K0S6</accession>
<proteinExistence type="inferred from homology"/>